<keyword id="KW-0067">ATP-binding</keyword>
<keyword id="KW-0418">Kinase</keyword>
<keyword id="KW-0469">Meiosis</keyword>
<keyword id="KW-0547">Nucleotide-binding</keyword>
<keyword id="KW-1185">Reference proteome</keyword>
<keyword id="KW-0723">Serine/threonine-protein kinase</keyword>
<keyword id="KW-0749">Sporulation</keyword>
<keyword id="KW-0808">Transferase</keyword>
<gene>
    <name type="primary">IME2</name>
    <name type="synonym">SME1</name>
    <name type="ordered locus">YJL106W</name>
    <name type="ORF">J0817</name>
</gene>
<proteinExistence type="inferred from homology"/>
<comment type="function">
    <text>Protein kinase which is essential for the initiation of meiosis and sporulation.</text>
</comment>
<comment type="catalytic activity">
    <reaction>
        <text>L-seryl-[protein] + ATP = O-phospho-L-seryl-[protein] + ADP + H(+)</text>
        <dbReference type="Rhea" id="RHEA:17989"/>
        <dbReference type="Rhea" id="RHEA-COMP:9863"/>
        <dbReference type="Rhea" id="RHEA-COMP:11604"/>
        <dbReference type="ChEBI" id="CHEBI:15378"/>
        <dbReference type="ChEBI" id="CHEBI:29999"/>
        <dbReference type="ChEBI" id="CHEBI:30616"/>
        <dbReference type="ChEBI" id="CHEBI:83421"/>
        <dbReference type="ChEBI" id="CHEBI:456216"/>
        <dbReference type="EC" id="2.7.11.1"/>
    </reaction>
</comment>
<comment type="catalytic activity">
    <reaction>
        <text>L-threonyl-[protein] + ATP = O-phospho-L-threonyl-[protein] + ADP + H(+)</text>
        <dbReference type="Rhea" id="RHEA:46608"/>
        <dbReference type="Rhea" id="RHEA-COMP:11060"/>
        <dbReference type="Rhea" id="RHEA-COMP:11605"/>
        <dbReference type="ChEBI" id="CHEBI:15378"/>
        <dbReference type="ChEBI" id="CHEBI:30013"/>
        <dbReference type="ChEBI" id="CHEBI:30616"/>
        <dbReference type="ChEBI" id="CHEBI:61977"/>
        <dbReference type="ChEBI" id="CHEBI:456216"/>
        <dbReference type="EC" id="2.7.11.1"/>
    </reaction>
</comment>
<comment type="similarity">
    <text evidence="1">Belongs to the protein kinase superfamily. Ser/Thr protein kinase family.</text>
</comment>
<reference key="1">
    <citation type="journal article" date="1990" name="Mol. Gen. Genet.">
        <title>Initiation of meiosis and sporulation in Saccharomyces cerevisiae requires a novel protein kinase homologue.</title>
        <authorList>
            <person name="Yoshida M."/>
            <person name="Kawaguchi H."/>
            <person name="Sakata Y."/>
            <person name="Kominami K.I."/>
            <person name="Hirano M."/>
            <person name="Shima H."/>
            <person name="Akada R."/>
            <person name="Yamashita I."/>
        </authorList>
    </citation>
    <scope>NUCLEOTIDE SEQUENCE [GENOMIC DNA]</scope>
    <source>
        <strain>ATCC 38626 / AH22 / NRRL Y-12843</strain>
    </source>
</reference>
<reference key="2">
    <citation type="journal article" date="1995" name="Yeast">
        <title>A 37.5 kb region of yeast chromosome X includes the SME1, MEF2, GSH1 and CSD3 genes, a TCP-1-related gene, an open reading frame similar to the DAL80 gene, and a tRNA(Arg).</title>
        <authorList>
            <person name="Rasmussen S.W."/>
        </authorList>
    </citation>
    <scope>NUCLEOTIDE SEQUENCE [GENOMIC DNA]</scope>
    <source>
        <strain>ATCC 96604 / S288c / FY1679</strain>
    </source>
</reference>
<reference key="3">
    <citation type="journal article" date="1996" name="EMBO J.">
        <title>Complete nucleotide sequence of Saccharomyces cerevisiae chromosome X.</title>
        <authorList>
            <person name="Galibert F."/>
            <person name="Alexandraki D."/>
            <person name="Baur A."/>
            <person name="Boles E."/>
            <person name="Chalwatzis N."/>
            <person name="Chuat J.-C."/>
            <person name="Coster F."/>
            <person name="Cziepluch C."/>
            <person name="de Haan M."/>
            <person name="Domdey H."/>
            <person name="Durand P."/>
            <person name="Entian K.-D."/>
            <person name="Gatius M."/>
            <person name="Goffeau A."/>
            <person name="Grivell L.A."/>
            <person name="Hennemann A."/>
            <person name="Herbert C.J."/>
            <person name="Heumann K."/>
            <person name="Hilger F."/>
            <person name="Hollenberg C.P."/>
            <person name="Huang M.-E."/>
            <person name="Jacq C."/>
            <person name="Jauniaux J.-C."/>
            <person name="Katsoulou C."/>
            <person name="Kirchrath L."/>
            <person name="Kleine K."/>
            <person name="Kordes E."/>
            <person name="Koetter P."/>
            <person name="Liebl S."/>
            <person name="Louis E.J."/>
            <person name="Manus V."/>
            <person name="Mewes H.-W."/>
            <person name="Miosga T."/>
            <person name="Obermaier B."/>
            <person name="Perea J."/>
            <person name="Pohl T.M."/>
            <person name="Portetelle D."/>
            <person name="Pujol A."/>
            <person name="Purnelle B."/>
            <person name="Ramezani Rad M."/>
            <person name="Rasmussen S.W."/>
            <person name="Rose M."/>
            <person name="Rossau R."/>
            <person name="Schaaff-Gerstenschlaeger I."/>
            <person name="Smits P.H.M."/>
            <person name="Scarcez T."/>
            <person name="Soriano N."/>
            <person name="To Van D."/>
            <person name="Tzermia M."/>
            <person name="Van Broekhoven A."/>
            <person name="Vandenbol M."/>
            <person name="Wedler H."/>
            <person name="von Wettstein D."/>
            <person name="Wambutt R."/>
            <person name="Zagulski M."/>
            <person name="Zollner A."/>
            <person name="Karpfinger-Hartl L."/>
        </authorList>
    </citation>
    <scope>NUCLEOTIDE SEQUENCE [LARGE SCALE GENOMIC DNA]</scope>
    <source>
        <strain>ATCC 204508 / S288c</strain>
    </source>
</reference>
<reference key="4">
    <citation type="journal article" date="2014" name="G3 (Bethesda)">
        <title>The reference genome sequence of Saccharomyces cerevisiae: Then and now.</title>
        <authorList>
            <person name="Engel S.R."/>
            <person name="Dietrich F.S."/>
            <person name="Fisk D.G."/>
            <person name="Binkley G."/>
            <person name="Balakrishnan R."/>
            <person name="Costanzo M.C."/>
            <person name="Dwight S.S."/>
            <person name="Hitz B.C."/>
            <person name="Karra K."/>
            <person name="Nash R.S."/>
            <person name="Weng S."/>
            <person name="Wong E.D."/>
            <person name="Lloyd P."/>
            <person name="Skrzypek M.S."/>
            <person name="Miyasato S.R."/>
            <person name="Simison M."/>
            <person name="Cherry J.M."/>
        </authorList>
    </citation>
    <scope>GENOME REANNOTATION</scope>
    <source>
        <strain>ATCC 204508 / S288c</strain>
    </source>
</reference>
<name>IME2_YEAST</name>
<accession>P32581</accession>
<accession>D6VW78</accession>
<feature type="chain" id="PRO_0000086023" description="Meiosis induction protein kinase IME2/SME1">
    <location>
        <begin position="1"/>
        <end position="645"/>
    </location>
</feature>
<feature type="domain" description="Protein kinase" evidence="1">
    <location>
        <begin position="38"/>
        <end position="386"/>
    </location>
</feature>
<feature type="region of interest" description="Disordered" evidence="3">
    <location>
        <begin position="1"/>
        <end position="24"/>
    </location>
</feature>
<feature type="compositionally biased region" description="Low complexity" evidence="3">
    <location>
        <begin position="8"/>
        <end position="17"/>
    </location>
</feature>
<feature type="active site" description="Proton acceptor" evidence="1 2">
    <location>
        <position position="193"/>
    </location>
</feature>
<feature type="binding site" evidence="1">
    <location>
        <begin position="44"/>
        <end position="52"/>
    </location>
    <ligand>
        <name>ATP</name>
        <dbReference type="ChEBI" id="CHEBI:30616"/>
    </ligand>
</feature>
<feature type="binding site" evidence="1">
    <location>
        <position position="67"/>
    </location>
    <ligand>
        <name>ATP</name>
        <dbReference type="ChEBI" id="CHEBI:30616"/>
    </ligand>
</feature>
<sequence>MVEKRSRQSSSSGSEFSVPPDVDNPPLSIPLKTLSDRYQLIEKLGAGSFGCVTLAKAQFPLSNILGKQHDIRGTLMDQPKNGHQNYITKTQGVVAIKTMMTKLHTLQDYTRVREIKFILAIPANDHLIQIFEVFIDSENYQLHIVMECMEQNLYQMMKHRRRRVFSIPSLKSILSQILAGLKHIHEHNFFHRDLKPENILITPSTQYFEKEYMNQIGYQDNYVIKLADFGLARHVENKNPYTAYVSTRWYRSPEILLRSGYYSKPLDIWAFGCVAVEVTVFRALFPGANEIDQIWKILEVLGTPIKRSDFVNTNHITAPPPGGFWDDASNLVHKLNLKLPYVEGSSLDHLLSSSQLSDLSEVVKKCLRWDPNERATAQELCEMPFFENTVASQVDARGNVTNTEQALIFAGINPVATNTKPIYFNSSTKLPAETESNDIDISNNDHDSHAMCSPTLNQEKLTLVEFLNEFVEEDNDDHSIPDVGTDSTISDSIDETELSKEIRNNLALCQLPDEEVLDHSLSNIRQLTNDIEIINKDEADNMEQLFFDLEIPEKDEFQRKQPFNEHADIDEDIVLPYVNNSNYTHTDRSHHRGDNVLGDASLGDSFNSMPDFTPRNFLIPTLKKSREKFEPHLSNSNQHFGNVTF</sequence>
<organism>
    <name type="scientific">Saccharomyces cerevisiae (strain ATCC 204508 / S288c)</name>
    <name type="common">Baker's yeast</name>
    <dbReference type="NCBI Taxonomy" id="559292"/>
    <lineage>
        <taxon>Eukaryota</taxon>
        <taxon>Fungi</taxon>
        <taxon>Dikarya</taxon>
        <taxon>Ascomycota</taxon>
        <taxon>Saccharomycotina</taxon>
        <taxon>Saccharomycetes</taxon>
        <taxon>Saccharomycetales</taxon>
        <taxon>Saccharomycetaceae</taxon>
        <taxon>Saccharomyces</taxon>
    </lineage>
</organism>
<protein>
    <recommendedName>
        <fullName>Meiosis induction protein kinase IME2/SME1</fullName>
        <ecNumber>2.7.11.1</ecNumber>
    </recommendedName>
</protein>
<dbReference type="EC" id="2.7.11.1"/>
<dbReference type="EMBL" id="X53262">
    <property type="protein sequence ID" value="CAA37351.1"/>
    <property type="molecule type" value="Genomic_DNA"/>
</dbReference>
<dbReference type="EMBL" id="X85021">
    <property type="protein sequence ID" value="CAA59388.1"/>
    <property type="molecule type" value="Genomic_DNA"/>
</dbReference>
<dbReference type="EMBL" id="Z49381">
    <property type="protein sequence ID" value="CAA89401.1"/>
    <property type="molecule type" value="Genomic_DNA"/>
</dbReference>
<dbReference type="EMBL" id="BK006943">
    <property type="protein sequence ID" value="DAA08694.1"/>
    <property type="molecule type" value="Genomic_DNA"/>
</dbReference>
<dbReference type="PIR" id="S20138">
    <property type="entry name" value="S20138"/>
</dbReference>
<dbReference type="RefSeq" id="NP_012429.1">
    <property type="nucleotide sequence ID" value="NM_001181539.1"/>
</dbReference>
<dbReference type="SMR" id="P32581"/>
<dbReference type="BioGRID" id="33650">
    <property type="interactions" value="283"/>
</dbReference>
<dbReference type="DIP" id="DIP-4610N"/>
<dbReference type="FunCoup" id="P32581">
    <property type="interactions" value="744"/>
</dbReference>
<dbReference type="IntAct" id="P32581">
    <property type="interactions" value="34"/>
</dbReference>
<dbReference type="MINT" id="P32581"/>
<dbReference type="STRING" id="4932.YJL106W"/>
<dbReference type="iPTMnet" id="P32581"/>
<dbReference type="PaxDb" id="4932-YJL106W"/>
<dbReference type="PeptideAtlas" id="P32581"/>
<dbReference type="EnsemblFungi" id="YJL106W_mRNA">
    <property type="protein sequence ID" value="YJL106W"/>
    <property type="gene ID" value="YJL106W"/>
</dbReference>
<dbReference type="GeneID" id="853338"/>
<dbReference type="KEGG" id="sce:YJL106W"/>
<dbReference type="AGR" id="SGD:S000003642"/>
<dbReference type="SGD" id="S000003642">
    <property type="gene designation" value="IME2"/>
</dbReference>
<dbReference type="VEuPathDB" id="FungiDB:YJL106W"/>
<dbReference type="eggNOG" id="KOG0661">
    <property type="taxonomic scope" value="Eukaryota"/>
</dbReference>
<dbReference type="HOGENOM" id="CLU_000288_176_1_1"/>
<dbReference type="InParanoid" id="P32581"/>
<dbReference type="OMA" id="FNEHADI"/>
<dbReference type="OrthoDB" id="2158884at2759"/>
<dbReference type="BioCyc" id="YEAST:G3O-31560-MONOMER"/>
<dbReference type="BRENDA" id="2.7.11.22">
    <property type="organism ID" value="984"/>
</dbReference>
<dbReference type="BioGRID-ORCS" id="853338">
    <property type="hits" value="1 hit in 13 CRISPR screens"/>
</dbReference>
<dbReference type="PRO" id="PR:P32581"/>
<dbReference type="Proteomes" id="UP000002311">
    <property type="component" value="Chromosome X"/>
</dbReference>
<dbReference type="RNAct" id="P32581">
    <property type="molecule type" value="protein"/>
</dbReference>
<dbReference type="GO" id="GO:0005737">
    <property type="term" value="C:cytoplasm"/>
    <property type="evidence" value="ECO:0000318"/>
    <property type="project" value="GO_Central"/>
</dbReference>
<dbReference type="GO" id="GO:0005634">
    <property type="term" value="C:nucleus"/>
    <property type="evidence" value="ECO:0000314"/>
    <property type="project" value="SGD"/>
</dbReference>
<dbReference type="GO" id="GO:0005524">
    <property type="term" value="F:ATP binding"/>
    <property type="evidence" value="ECO:0007669"/>
    <property type="project" value="UniProtKB-KW"/>
</dbReference>
<dbReference type="GO" id="GO:0004672">
    <property type="term" value="F:protein kinase activity"/>
    <property type="evidence" value="ECO:0000314"/>
    <property type="project" value="SGD"/>
</dbReference>
<dbReference type="GO" id="GO:0106310">
    <property type="term" value="F:protein serine kinase activity"/>
    <property type="evidence" value="ECO:0007669"/>
    <property type="project" value="RHEA"/>
</dbReference>
<dbReference type="GO" id="GO:0004674">
    <property type="term" value="F:protein serine/threonine kinase activity"/>
    <property type="evidence" value="ECO:0000318"/>
    <property type="project" value="GO_Central"/>
</dbReference>
<dbReference type="GO" id="GO:0035556">
    <property type="term" value="P:intracellular signal transduction"/>
    <property type="evidence" value="ECO:0000318"/>
    <property type="project" value="GO_Central"/>
</dbReference>
<dbReference type="GO" id="GO:0051321">
    <property type="term" value="P:meiotic cell cycle"/>
    <property type="evidence" value="ECO:0007669"/>
    <property type="project" value="UniProtKB-KW"/>
</dbReference>
<dbReference type="GO" id="GO:0040020">
    <property type="term" value="P:regulation of meiotic nuclear division"/>
    <property type="evidence" value="ECO:0000315"/>
    <property type="project" value="SGD"/>
</dbReference>
<dbReference type="GO" id="GO:0030435">
    <property type="term" value="P:sporulation resulting in formation of a cellular spore"/>
    <property type="evidence" value="ECO:0007669"/>
    <property type="project" value="UniProtKB-KW"/>
</dbReference>
<dbReference type="CDD" id="cd07830">
    <property type="entry name" value="STKc_MAK_like"/>
    <property type="match status" value="1"/>
</dbReference>
<dbReference type="FunFam" id="1.10.510.10:FF:000818">
    <property type="entry name" value="Protein kinase"/>
    <property type="match status" value="1"/>
</dbReference>
<dbReference type="Gene3D" id="3.30.200.20">
    <property type="entry name" value="Phosphorylase Kinase, domain 1"/>
    <property type="match status" value="1"/>
</dbReference>
<dbReference type="Gene3D" id="1.10.510.10">
    <property type="entry name" value="Transferase(Phosphotransferase) domain 1"/>
    <property type="match status" value="1"/>
</dbReference>
<dbReference type="InterPro" id="IPR011009">
    <property type="entry name" value="Kinase-like_dom_sf"/>
</dbReference>
<dbReference type="InterPro" id="IPR050117">
    <property type="entry name" value="MAP_kinase"/>
</dbReference>
<dbReference type="InterPro" id="IPR000719">
    <property type="entry name" value="Prot_kinase_dom"/>
</dbReference>
<dbReference type="InterPro" id="IPR008271">
    <property type="entry name" value="Ser/Thr_kinase_AS"/>
</dbReference>
<dbReference type="PANTHER" id="PTHR24055">
    <property type="entry name" value="MITOGEN-ACTIVATED PROTEIN KINASE"/>
    <property type="match status" value="1"/>
</dbReference>
<dbReference type="Pfam" id="PF00069">
    <property type="entry name" value="Pkinase"/>
    <property type="match status" value="1"/>
</dbReference>
<dbReference type="SMART" id="SM00220">
    <property type="entry name" value="S_TKc"/>
    <property type="match status" value="1"/>
</dbReference>
<dbReference type="SUPFAM" id="SSF56112">
    <property type="entry name" value="Protein kinase-like (PK-like)"/>
    <property type="match status" value="1"/>
</dbReference>
<dbReference type="PROSITE" id="PS50011">
    <property type="entry name" value="PROTEIN_KINASE_DOM"/>
    <property type="match status" value="1"/>
</dbReference>
<dbReference type="PROSITE" id="PS00108">
    <property type="entry name" value="PROTEIN_KINASE_ST"/>
    <property type="match status" value="1"/>
</dbReference>
<evidence type="ECO:0000255" key="1">
    <source>
        <dbReference type="PROSITE-ProRule" id="PRU00159"/>
    </source>
</evidence>
<evidence type="ECO:0000255" key="2">
    <source>
        <dbReference type="PROSITE-ProRule" id="PRU10027"/>
    </source>
</evidence>
<evidence type="ECO:0000256" key="3">
    <source>
        <dbReference type="SAM" id="MobiDB-lite"/>
    </source>
</evidence>